<organism>
    <name type="scientific">Bradyrhizobium diazoefficiens (strain JCM 10833 / BCRC 13528 / IAM 13628 / NBRC 14792 / USDA 110)</name>
    <dbReference type="NCBI Taxonomy" id="224911"/>
    <lineage>
        <taxon>Bacteria</taxon>
        <taxon>Pseudomonadati</taxon>
        <taxon>Pseudomonadota</taxon>
        <taxon>Alphaproteobacteria</taxon>
        <taxon>Hyphomicrobiales</taxon>
        <taxon>Nitrobacteraceae</taxon>
        <taxon>Bradyrhizobium</taxon>
    </lineage>
</organism>
<accession>Q89LP2</accession>
<sequence length="346" mass="36744">MVRFEGISKTYPAYRGKPGVNALQDIDFAIPRGSITGVIGRSGAGKSSLVRLINGLEKPTTGRVIVDNKDISALAGRELRLAQRSIGMIFQHFNLLSSRTAADNIALPLEIAGWARADIKARVAELLALVGIADKHDRYPSELSGGQKQRVGIARALATRPSVLLSDEATSALDPQTTRAILDLLANINRELGVTIVLITHEMSVVRQLAREVVVLDAGHVVESGHVADIFTHPKHPITQSFLAEVVGDSLPVSLASRIVSEPSAGGQAVIRVQVRGAGAGDTVVARLARELGLDVALLAARIDEIGGQHVGSLVLGVPGSEDVQARVLAWLSQYQFPAERLGYVA</sequence>
<feature type="chain" id="PRO_0000270256" description="Methionine import ATP-binding protein MetN">
    <location>
        <begin position="1"/>
        <end position="346"/>
    </location>
</feature>
<feature type="domain" description="ABC transporter" evidence="1">
    <location>
        <begin position="2"/>
        <end position="243"/>
    </location>
</feature>
<feature type="binding site" evidence="1">
    <location>
        <begin position="40"/>
        <end position="47"/>
    </location>
    <ligand>
        <name>ATP</name>
        <dbReference type="ChEBI" id="CHEBI:30616"/>
    </ligand>
</feature>
<keyword id="KW-0029">Amino-acid transport</keyword>
<keyword id="KW-0067">ATP-binding</keyword>
<keyword id="KW-0997">Cell inner membrane</keyword>
<keyword id="KW-1003">Cell membrane</keyword>
<keyword id="KW-0472">Membrane</keyword>
<keyword id="KW-0547">Nucleotide-binding</keyword>
<keyword id="KW-1185">Reference proteome</keyword>
<keyword id="KW-1278">Translocase</keyword>
<keyword id="KW-0813">Transport</keyword>
<comment type="function">
    <text evidence="1">Part of the ABC transporter complex MetNIQ involved in methionine import. Responsible for energy coupling to the transport system.</text>
</comment>
<comment type="catalytic activity">
    <reaction evidence="1">
        <text>L-methionine(out) + ATP + H2O = L-methionine(in) + ADP + phosphate + H(+)</text>
        <dbReference type="Rhea" id="RHEA:29779"/>
        <dbReference type="ChEBI" id="CHEBI:15377"/>
        <dbReference type="ChEBI" id="CHEBI:15378"/>
        <dbReference type="ChEBI" id="CHEBI:30616"/>
        <dbReference type="ChEBI" id="CHEBI:43474"/>
        <dbReference type="ChEBI" id="CHEBI:57844"/>
        <dbReference type="ChEBI" id="CHEBI:456216"/>
        <dbReference type="EC" id="7.4.2.11"/>
    </reaction>
</comment>
<comment type="catalytic activity">
    <reaction evidence="1">
        <text>D-methionine(out) + ATP + H2O = D-methionine(in) + ADP + phosphate + H(+)</text>
        <dbReference type="Rhea" id="RHEA:29767"/>
        <dbReference type="ChEBI" id="CHEBI:15377"/>
        <dbReference type="ChEBI" id="CHEBI:15378"/>
        <dbReference type="ChEBI" id="CHEBI:30616"/>
        <dbReference type="ChEBI" id="CHEBI:43474"/>
        <dbReference type="ChEBI" id="CHEBI:57932"/>
        <dbReference type="ChEBI" id="CHEBI:456216"/>
        <dbReference type="EC" id="7.4.2.11"/>
    </reaction>
</comment>
<comment type="subunit">
    <text evidence="1">The complex is composed of two ATP-binding proteins (MetN), two transmembrane proteins (MetI) and a solute-binding protein (MetQ).</text>
</comment>
<comment type="subcellular location">
    <subcellularLocation>
        <location evidence="1">Cell inner membrane</location>
        <topology evidence="1">Peripheral membrane protein</topology>
    </subcellularLocation>
</comment>
<comment type="similarity">
    <text evidence="1">Belongs to the ABC transporter superfamily. Methionine importer (TC 3.A.1.24) family.</text>
</comment>
<protein>
    <recommendedName>
        <fullName evidence="1">Methionine import ATP-binding protein MetN</fullName>
        <ecNumber evidence="1">7.4.2.11</ecNumber>
    </recommendedName>
</protein>
<reference key="1">
    <citation type="journal article" date="2002" name="DNA Res.">
        <title>Complete genomic sequence of nitrogen-fixing symbiotic bacterium Bradyrhizobium japonicum USDA110.</title>
        <authorList>
            <person name="Kaneko T."/>
            <person name="Nakamura Y."/>
            <person name="Sato S."/>
            <person name="Minamisawa K."/>
            <person name="Uchiumi T."/>
            <person name="Sasamoto S."/>
            <person name="Watanabe A."/>
            <person name="Idesawa K."/>
            <person name="Iriguchi M."/>
            <person name="Kawashima K."/>
            <person name="Kohara M."/>
            <person name="Matsumoto M."/>
            <person name="Shimpo S."/>
            <person name="Tsuruoka H."/>
            <person name="Wada T."/>
            <person name="Yamada M."/>
            <person name="Tabata S."/>
        </authorList>
    </citation>
    <scope>NUCLEOTIDE SEQUENCE [LARGE SCALE GENOMIC DNA]</scope>
    <source>
        <strain>JCM 10833 / BCRC 13528 / IAM 13628 / NBRC 14792 / USDA 110</strain>
    </source>
</reference>
<name>METN_BRADU</name>
<dbReference type="EC" id="7.4.2.11" evidence="1"/>
<dbReference type="EMBL" id="BA000040">
    <property type="protein sequence ID" value="BAC49766.1"/>
    <property type="molecule type" value="Genomic_DNA"/>
</dbReference>
<dbReference type="RefSeq" id="NP_771141.1">
    <property type="nucleotide sequence ID" value="NC_004463.1"/>
</dbReference>
<dbReference type="SMR" id="Q89LP2"/>
<dbReference type="FunCoup" id="Q89LP2">
    <property type="interactions" value="273"/>
</dbReference>
<dbReference type="STRING" id="224911.AAV28_19680"/>
<dbReference type="EnsemblBacteria" id="BAC49766">
    <property type="protein sequence ID" value="BAC49766"/>
    <property type="gene ID" value="BAC49766"/>
</dbReference>
<dbReference type="KEGG" id="bja:blr4501"/>
<dbReference type="PATRIC" id="fig|224911.5.peg.4556"/>
<dbReference type="eggNOG" id="COG1135">
    <property type="taxonomic scope" value="Bacteria"/>
</dbReference>
<dbReference type="HOGENOM" id="CLU_000604_1_3_5"/>
<dbReference type="InParanoid" id="Q89LP2"/>
<dbReference type="OrthoDB" id="9802264at2"/>
<dbReference type="PhylomeDB" id="Q89LP2"/>
<dbReference type="Proteomes" id="UP000002526">
    <property type="component" value="Chromosome"/>
</dbReference>
<dbReference type="GO" id="GO:0005886">
    <property type="term" value="C:plasma membrane"/>
    <property type="evidence" value="ECO:0007669"/>
    <property type="project" value="UniProtKB-SubCell"/>
</dbReference>
<dbReference type="GO" id="GO:0033232">
    <property type="term" value="F:ABC-type D-methionine transporter activity"/>
    <property type="evidence" value="ECO:0007669"/>
    <property type="project" value="UniProtKB-EC"/>
</dbReference>
<dbReference type="GO" id="GO:0005524">
    <property type="term" value="F:ATP binding"/>
    <property type="evidence" value="ECO:0007669"/>
    <property type="project" value="UniProtKB-KW"/>
</dbReference>
<dbReference type="GO" id="GO:0016887">
    <property type="term" value="F:ATP hydrolysis activity"/>
    <property type="evidence" value="ECO:0007669"/>
    <property type="project" value="InterPro"/>
</dbReference>
<dbReference type="CDD" id="cd03258">
    <property type="entry name" value="ABC_MetN_methionine_transporter"/>
    <property type="match status" value="1"/>
</dbReference>
<dbReference type="FunFam" id="3.40.50.300:FF:000056">
    <property type="entry name" value="Cell division ATP-binding protein FtsE"/>
    <property type="match status" value="1"/>
</dbReference>
<dbReference type="Gene3D" id="3.30.70.260">
    <property type="match status" value="1"/>
</dbReference>
<dbReference type="Gene3D" id="3.40.50.300">
    <property type="entry name" value="P-loop containing nucleotide triphosphate hydrolases"/>
    <property type="match status" value="1"/>
</dbReference>
<dbReference type="InterPro" id="IPR003593">
    <property type="entry name" value="AAA+_ATPase"/>
</dbReference>
<dbReference type="InterPro" id="IPR003439">
    <property type="entry name" value="ABC_transporter-like_ATP-bd"/>
</dbReference>
<dbReference type="InterPro" id="IPR017871">
    <property type="entry name" value="ABC_transporter-like_CS"/>
</dbReference>
<dbReference type="InterPro" id="IPR045865">
    <property type="entry name" value="ACT-like_dom_sf"/>
</dbReference>
<dbReference type="InterPro" id="IPR041701">
    <property type="entry name" value="MetN_ABC"/>
</dbReference>
<dbReference type="InterPro" id="IPR050086">
    <property type="entry name" value="MetN_ABC_transporter-like"/>
</dbReference>
<dbReference type="InterPro" id="IPR018449">
    <property type="entry name" value="NIL_domain"/>
</dbReference>
<dbReference type="InterPro" id="IPR027417">
    <property type="entry name" value="P-loop_NTPase"/>
</dbReference>
<dbReference type="PANTHER" id="PTHR43166">
    <property type="entry name" value="AMINO ACID IMPORT ATP-BINDING PROTEIN"/>
    <property type="match status" value="1"/>
</dbReference>
<dbReference type="PANTHER" id="PTHR43166:SF30">
    <property type="entry name" value="METHIONINE IMPORT ATP-BINDING PROTEIN METN"/>
    <property type="match status" value="1"/>
</dbReference>
<dbReference type="Pfam" id="PF00005">
    <property type="entry name" value="ABC_tran"/>
    <property type="match status" value="1"/>
</dbReference>
<dbReference type="Pfam" id="PF09383">
    <property type="entry name" value="NIL"/>
    <property type="match status" value="1"/>
</dbReference>
<dbReference type="SMART" id="SM00382">
    <property type="entry name" value="AAA"/>
    <property type="match status" value="1"/>
</dbReference>
<dbReference type="SMART" id="SM00930">
    <property type="entry name" value="NIL"/>
    <property type="match status" value="1"/>
</dbReference>
<dbReference type="SUPFAM" id="SSF55021">
    <property type="entry name" value="ACT-like"/>
    <property type="match status" value="1"/>
</dbReference>
<dbReference type="SUPFAM" id="SSF52540">
    <property type="entry name" value="P-loop containing nucleoside triphosphate hydrolases"/>
    <property type="match status" value="1"/>
</dbReference>
<dbReference type="PROSITE" id="PS00211">
    <property type="entry name" value="ABC_TRANSPORTER_1"/>
    <property type="match status" value="1"/>
</dbReference>
<dbReference type="PROSITE" id="PS50893">
    <property type="entry name" value="ABC_TRANSPORTER_2"/>
    <property type="match status" value="1"/>
</dbReference>
<dbReference type="PROSITE" id="PS51264">
    <property type="entry name" value="METN"/>
    <property type="match status" value="1"/>
</dbReference>
<gene>
    <name evidence="1" type="primary">metN</name>
    <name type="ordered locus">blr4501</name>
</gene>
<evidence type="ECO:0000255" key="1">
    <source>
        <dbReference type="HAMAP-Rule" id="MF_01719"/>
    </source>
</evidence>
<proteinExistence type="inferred from homology"/>